<proteinExistence type="inferred from homology"/>
<name>DADA_CITK8</name>
<keyword id="KW-0274">FAD</keyword>
<keyword id="KW-0285">Flavoprotein</keyword>
<keyword id="KW-0560">Oxidoreductase</keyword>
<keyword id="KW-1185">Reference proteome</keyword>
<dbReference type="EC" id="1.4.99.-" evidence="1"/>
<dbReference type="EMBL" id="CP000822">
    <property type="protein sequence ID" value="ABV12333.1"/>
    <property type="molecule type" value="Genomic_DNA"/>
</dbReference>
<dbReference type="RefSeq" id="WP_012132085.1">
    <property type="nucleotide sequence ID" value="NC_009792.1"/>
</dbReference>
<dbReference type="SMR" id="A8AFS0"/>
<dbReference type="STRING" id="290338.CKO_01193"/>
<dbReference type="GeneID" id="45135322"/>
<dbReference type="KEGG" id="cko:CKO_01193"/>
<dbReference type="HOGENOM" id="CLU_007884_9_2_6"/>
<dbReference type="OrthoDB" id="9805337at2"/>
<dbReference type="UniPathway" id="UPA00043">
    <property type="reaction ID" value="UER00498"/>
</dbReference>
<dbReference type="Proteomes" id="UP000008148">
    <property type="component" value="Chromosome"/>
</dbReference>
<dbReference type="GO" id="GO:0005737">
    <property type="term" value="C:cytoplasm"/>
    <property type="evidence" value="ECO:0007669"/>
    <property type="project" value="TreeGrafter"/>
</dbReference>
<dbReference type="GO" id="GO:0005886">
    <property type="term" value="C:plasma membrane"/>
    <property type="evidence" value="ECO:0007669"/>
    <property type="project" value="TreeGrafter"/>
</dbReference>
<dbReference type="GO" id="GO:0008718">
    <property type="term" value="F:D-amino-acid dehydrogenase activity"/>
    <property type="evidence" value="ECO:0007669"/>
    <property type="project" value="UniProtKB-UniRule"/>
</dbReference>
<dbReference type="GO" id="GO:0055130">
    <property type="term" value="P:D-alanine catabolic process"/>
    <property type="evidence" value="ECO:0007669"/>
    <property type="project" value="UniProtKB-UniPathway"/>
</dbReference>
<dbReference type="FunFam" id="3.50.50.60:FF:000020">
    <property type="entry name" value="D-amino acid dehydrogenase"/>
    <property type="match status" value="1"/>
</dbReference>
<dbReference type="Gene3D" id="3.30.9.10">
    <property type="entry name" value="D-Amino Acid Oxidase, subunit A, domain 2"/>
    <property type="match status" value="1"/>
</dbReference>
<dbReference type="Gene3D" id="3.50.50.60">
    <property type="entry name" value="FAD/NAD(P)-binding domain"/>
    <property type="match status" value="2"/>
</dbReference>
<dbReference type="HAMAP" id="MF_01202">
    <property type="entry name" value="DadA"/>
    <property type="match status" value="1"/>
</dbReference>
<dbReference type="InterPro" id="IPR023080">
    <property type="entry name" value="DadA"/>
</dbReference>
<dbReference type="InterPro" id="IPR006076">
    <property type="entry name" value="FAD-dep_OxRdtase"/>
</dbReference>
<dbReference type="InterPro" id="IPR036188">
    <property type="entry name" value="FAD/NAD-bd_sf"/>
</dbReference>
<dbReference type="NCBIfam" id="NF001933">
    <property type="entry name" value="PRK00711.1"/>
    <property type="match status" value="1"/>
</dbReference>
<dbReference type="PANTHER" id="PTHR13847:SF280">
    <property type="entry name" value="D-AMINO ACID DEHYDROGENASE"/>
    <property type="match status" value="1"/>
</dbReference>
<dbReference type="PANTHER" id="PTHR13847">
    <property type="entry name" value="SARCOSINE DEHYDROGENASE-RELATED"/>
    <property type="match status" value="1"/>
</dbReference>
<dbReference type="Pfam" id="PF01266">
    <property type="entry name" value="DAO"/>
    <property type="match status" value="1"/>
</dbReference>
<dbReference type="SUPFAM" id="SSF54373">
    <property type="entry name" value="FAD-linked reductases, C-terminal domain"/>
    <property type="match status" value="1"/>
</dbReference>
<dbReference type="SUPFAM" id="SSF51905">
    <property type="entry name" value="FAD/NAD(P)-binding domain"/>
    <property type="match status" value="1"/>
</dbReference>
<reference key="1">
    <citation type="submission" date="2007-08" db="EMBL/GenBank/DDBJ databases">
        <authorList>
            <consortium name="The Citrobacter koseri Genome Sequencing Project"/>
            <person name="McClelland M."/>
            <person name="Sanderson E.K."/>
            <person name="Porwollik S."/>
            <person name="Spieth J."/>
            <person name="Clifton W.S."/>
            <person name="Latreille P."/>
            <person name="Courtney L."/>
            <person name="Wang C."/>
            <person name="Pepin K."/>
            <person name="Bhonagiri V."/>
            <person name="Nash W."/>
            <person name="Johnson M."/>
            <person name="Thiruvilangam P."/>
            <person name="Wilson R."/>
        </authorList>
    </citation>
    <scope>NUCLEOTIDE SEQUENCE [LARGE SCALE GENOMIC DNA]</scope>
    <source>
        <strain>ATCC BAA-895 / CDC 4225-83 / SGSC4696</strain>
    </source>
</reference>
<gene>
    <name evidence="1" type="primary">dadA</name>
    <name type="ordered locus">CKO_01193</name>
</gene>
<sequence length="432" mass="47691">MRVVILGSGVVGVTSAWYLCQAGHDVTVIDREPGPALETSAANAGQISPGYAAPWAAPGVPLKAIKWMFQRHAPLAVRLDGTQFQLKWMWQMLRNCDTRHYMENKGRMVRLAEYSRDCLKALRASTGIQYEGRQGGTLQLFRTAQQYENATRDIAVLEDAGVPYQLLESSRLAEVEPALAEVAHKLTGGLRLPNDETGDCQLFTQRLAQMAEQAGVTFRFNTPVEKLLYEGEQIYGVKCGDDIIKADAYVMAFGSYSTAMLKGIVDIPVYPLKGYSLTIPVAQDDGAPVSTILDETYKIAITRFDKRIRVGGMAEIVGFNTELLQPRRETLEMVVRDLFPRGGHVEQATFWTGLRPMTPDGTPVIGRTRFKNLWLNTGHGTLGWTMACGSGQLLSDILSGRTPAIPYDDLSVARYSPGFTPSRPRHLHGAHN</sequence>
<evidence type="ECO:0000255" key="1">
    <source>
        <dbReference type="HAMAP-Rule" id="MF_01202"/>
    </source>
</evidence>
<comment type="function">
    <text evidence="1">Oxidative deamination of D-amino acids.</text>
</comment>
<comment type="catalytic activity">
    <reaction evidence="1">
        <text>a D-alpha-amino acid + A + H2O = a 2-oxocarboxylate + AH2 + NH4(+)</text>
        <dbReference type="Rhea" id="RHEA:18125"/>
        <dbReference type="ChEBI" id="CHEBI:13193"/>
        <dbReference type="ChEBI" id="CHEBI:15377"/>
        <dbReference type="ChEBI" id="CHEBI:17499"/>
        <dbReference type="ChEBI" id="CHEBI:28938"/>
        <dbReference type="ChEBI" id="CHEBI:35179"/>
        <dbReference type="ChEBI" id="CHEBI:59871"/>
    </reaction>
</comment>
<comment type="cofactor">
    <cofactor evidence="1">
        <name>FAD</name>
        <dbReference type="ChEBI" id="CHEBI:57692"/>
    </cofactor>
</comment>
<comment type="pathway">
    <text>Amino-acid degradation; D-alanine degradation; NH(3) and pyruvate from D-alanine: step 1/1.</text>
</comment>
<comment type="similarity">
    <text evidence="1">Belongs to the DadA oxidoreductase family.</text>
</comment>
<protein>
    <recommendedName>
        <fullName evidence="1">D-amino acid dehydrogenase</fullName>
        <ecNumber evidence="1">1.4.99.-</ecNumber>
    </recommendedName>
</protein>
<feature type="chain" id="PRO_1000066088" description="D-amino acid dehydrogenase">
    <location>
        <begin position="1"/>
        <end position="432"/>
    </location>
</feature>
<feature type="binding site" evidence="1">
    <location>
        <begin position="3"/>
        <end position="17"/>
    </location>
    <ligand>
        <name>FAD</name>
        <dbReference type="ChEBI" id="CHEBI:57692"/>
    </ligand>
</feature>
<organism>
    <name type="scientific">Citrobacter koseri (strain ATCC BAA-895 / CDC 4225-83 / SGSC4696)</name>
    <dbReference type="NCBI Taxonomy" id="290338"/>
    <lineage>
        <taxon>Bacteria</taxon>
        <taxon>Pseudomonadati</taxon>
        <taxon>Pseudomonadota</taxon>
        <taxon>Gammaproteobacteria</taxon>
        <taxon>Enterobacterales</taxon>
        <taxon>Enterobacteriaceae</taxon>
        <taxon>Citrobacter</taxon>
    </lineage>
</organism>
<accession>A8AFS0</accession>